<dbReference type="EMBL" id="AM167904">
    <property type="protein sequence ID" value="CAJ47863.1"/>
    <property type="molecule type" value="Genomic_DNA"/>
</dbReference>
<dbReference type="RefSeq" id="WP_012415961.1">
    <property type="nucleotide sequence ID" value="NC_010645.1"/>
</dbReference>
<dbReference type="SMR" id="Q2L060"/>
<dbReference type="STRING" id="360910.BAV0258"/>
<dbReference type="GeneID" id="92936494"/>
<dbReference type="KEGG" id="bav:BAV0258"/>
<dbReference type="eggNOG" id="COG0211">
    <property type="taxonomic scope" value="Bacteria"/>
</dbReference>
<dbReference type="HOGENOM" id="CLU_095424_4_1_4"/>
<dbReference type="OrthoDB" id="9803474at2"/>
<dbReference type="Proteomes" id="UP000001977">
    <property type="component" value="Chromosome"/>
</dbReference>
<dbReference type="GO" id="GO:0022625">
    <property type="term" value="C:cytosolic large ribosomal subunit"/>
    <property type="evidence" value="ECO:0007669"/>
    <property type="project" value="TreeGrafter"/>
</dbReference>
<dbReference type="GO" id="GO:0003735">
    <property type="term" value="F:structural constituent of ribosome"/>
    <property type="evidence" value="ECO:0007669"/>
    <property type="project" value="InterPro"/>
</dbReference>
<dbReference type="GO" id="GO:0006412">
    <property type="term" value="P:translation"/>
    <property type="evidence" value="ECO:0007669"/>
    <property type="project" value="UniProtKB-UniRule"/>
</dbReference>
<dbReference type="FunFam" id="2.40.50.100:FF:000001">
    <property type="entry name" value="50S ribosomal protein L27"/>
    <property type="match status" value="1"/>
</dbReference>
<dbReference type="Gene3D" id="2.40.50.100">
    <property type="match status" value="1"/>
</dbReference>
<dbReference type="HAMAP" id="MF_00539">
    <property type="entry name" value="Ribosomal_bL27"/>
    <property type="match status" value="1"/>
</dbReference>
<dbReference type="InterPro" id="IPR001684">
    <property type="entry name" value="Ribosomal_bL27"/>
</dbReference>
<dbReference type="InterPro" id="IPR018261">
    <property type="entry name" value="Ribosomal_bL27_CS"/>
</dbReference>
<dbReference type="NCBIfam" id="TIGR00062">
    <property type="entry name" value="L27"/>
    <property type="match status" value="1"/>
</dbReference>
<dbReference type="PANTHER" id="PTHR15893:SF0">
    <property type="entry name" value="LARGE RIBOSOMAL SUBUNIT PROTEIN BL27M"/>
    <property type="match status" value="1"/>
</dbReference>
<dbReference type="PANTHER" id="PTHR15893">
    <property type="entry name" value="RIBOSOMAL PROTEIN L27"/>
    <property type="match status" value="1"/>
</dbReference>
<dbReference type="Pfam" id="PF01016">
    <property type="entry name" value="Ribosomal_L27"/>
    <property type="match status" value="1"/>
</dbReference>
<dbReference type="PRINTS" id="PR00063">
    <property type="entry name" value="RIBOSOMALL27"/>
</dbReference>
<dbReference type="SUPFAM" id="SSF110324">
    <property type="entry name" value="Ribosomal L27 protein-like"/>
    <property type="match status" value="1"/>
</dbReference>
<dbReference type="PROSITE" id="PS00831">
    <property type="entry name" value="RIBOSOMAL_L27"/>
    <property type="match status" value="1"/>
</dbReference>
<sequence length="86" mass="9051">MAQKKGGGSTRNGRDSESKRLGVKVYGGQEILAGSIIVRQRGTRFHPGVNVGVGKDHTLFALADGKVKFGTKGALNKATVWVEAAN</sequence>
<keyword id="KW-1185">Reference proteome</keyword>
<keyword id="KW-0687">Ribonucleoprotein</keyword>
<keyword id="KW-0689">Ribosomal protein</keyword>
<accession>Q2L060</accession>
<organism>
    <name type="scientific">Bordetella avium (strain 197N)</name>
    <dbReference type="NCBI Taxonomy" id="360910"/>
    <lineage>
        <taxon>Bacteria</taxon>
        <taxon>Pseudomonadati</taxon>
        <taxon>Pseudomonadota</taxon>
        <taxon>Betaproteobacteria</taxon>
        <taxon>Burkholderiales</taxon>
        <taxon>Alcaligenaceae</taxon>
        <taxon>Bordetella</taxon>
    </lineage>
</organism>
<name>RL27_BORA1</name>
<comment type="similarity">
    <text evidence="1">Belongs to the bacterial ribosomal protein bL27 family.</text>
</comment>
<protein>
    <recommendedName>
        <fullName evidence="1">Large ribosomal subunit protein bL27</fullName>
    </recommendedName>
    <alternativeName>
        <fullName evidence="3">50S ribosomal protein L27</fullName>
    </alternativeName>
</protein>
<gene>
    <name evidence="1" type="primary">rpmA</name>
    <name type="ordered locus">BAV0258</name>
</gene>
<feature type="chain" id="PRO_1000017419" description="Large ribosomal subunit protein bL27">
    <location>
        <begin position="1"/>
        <end position="86"/>
    </location>
</feature>
<feature type="region of interest" description="Disordered" evidence="2">
    <location>
        <begin position="1"/>
        <end position="20"/>
    </location>
</feature>
<feature type="compositionally biased region" description="Gly residues" evidence="2">
    <location>
        <begin position="1"/>
        <end position="10"/>
    </location>
</feature>
<reference key="1">
    <citation type="journal article" date="2006" name="J. Bacteriol.">
        <title>Comparison of the genome sequence of the poultry pathogen Bordetella avium with those of B. bronchiseptica, B. pertussis, and B. parapertussis reveals extensive diversity in surface structures associated with host interaction.</title>
        <authorList>
            <person name="Sebaihia M."/>
            <person name="Preston A."/>
            <person name="Maskell D.J."/>
            <person name="Kuzmiak H."/>
            <person name="Connell T.D."/>
            <person name="King N.D."/>
            <person name="Orndorff P.E."/>
            <person name="Miyamoto D.M."/>
            <person name="Thomson N.R."/>
            <person name="Harris D."/>
            <person name="Goble A."/>
            <person name="Lord A."/>
            <person name="Murphy L."/>
            <person name="Quail M.A."/>
            <person name="Rutter S."/>
            <person name="Squares R."/>
            <person name="Squares S."/>
            <person name="Woodward J."/>
            <person name="Parkhill J."/>
            <person name="Temple L.M."/>
        </authorList>
    </citation>
    <scope>NUCLEOTIDE SEQUENCE [LARGE SCALE GENOMIC DNA]</scope>
    <source>
        <strain>197N</strain>
    </source>
</reference>
<proteinExistence type="inferred from homology"/>
<evidence type="ECO:0000255" key="1">
    <source>
        <dbReference type="HAMAP-Rule" id="MF_00539"/>
    </source>
</evidence>
<evidence type="ECO:0000256" key="2">
    <source>
        <dbReference type="SAM" id="MobiDB-lite"/>
    </source>
</evidence>
<evidence type="ECO:0000305" key="3"/>